<gene>
    <name type="ordered locus">MGAS10750_Spy1258</name>
</gene>
<organism>
    <name type="scientific">Streptococcus pyogenes serotype M4 (strain MGAS10750)</name>
    <dbReference type="NCBI Taxonomy" id="370554"/>
    <lineage>
        <taxon>Bacteria</taxon>
        <taxon>Bacillati</taxon>
        <taxon>Bacillota</taxon>
        <taxon>Bacilli</taxon>
        <taxon>Lactobacillales</taxon>
        <taxon>Streptococcaceae</taxon>
        <taxon>Streptococcus</taxon>
    </lineage>
</organism>
<comment type="similarity">
    <text evidence="2">Belongs to the UPF0213 family.</text>
</comment>
<evidence type="ECO:0000255" key="1">
    <source>
        <dbReference type="PROSITE-ProRule" id="PRU00977"/>
    </source>
</evidence>
<evidence type="ECO:0000305" key="2"/>
<feature type="chain" id="PRO_1000063694" description="UPF0213 protein MGAS10750_Spy1258">
    <location>
        <begin position="1"/>
        <end position="92"/>
    </location>
</feature>
<feature type="domain" description="GIY-YIG" evidence="1">
    <location>
        <begin position="4"/>
        <end position="80"/>
    </location>
</feature>
<sequence length="92" mass="10735">MTTKKAYMYVLECVDKTLYTGYTTDLKKRLATHNAGKGAKYTRYRLPVSLLYYEVFDSKEAAMSAEALFKKRKTRSQKLAYIATHQKEKKNH</sequence>
<protein>
    <recommendedName>
        <fullName>UPF0213 protein MGAS10750_Spy1258</fullName>
    </recommendedName>
</protein>
<accession>Q1J5X5</accession>
<proteinExistence type="inferred from homology"/>
<dbReference type="EMBL" id="CP000262">
    <property type="protein sequence ID" value="ABF38208.1"/>
    <property type="molecule type" value="Genomic_DNA"/>
</dbReference>
<dbReference type="SMR" id="Q1J5X5"/>
<dbReference type="KEGG" id="spi:MGAS10750_Spy1258"/>
<dbReference type="HOGENOM" id="CLU_135650_0_3_9"/>
<dbReference type="Proteomes" id="UP000002434">
    <property type="component" value="Chromosome"/>
</dbReference>
<dbReference type="CDD" id="cd10456">
    <property type="entry name" value="GIY-YIG_UPF0213"/>
    <property type="match status" value="1"/>
</dbReference>
<dbReference type="Gene3D" id="3.40.1440.10">
    <property type="entry name" value="GIY-YIG endonuclease"/>
    <property type="match status" value="1"/>
</dbReference>
<dbReference type="InterPro" id="IPR000305">
    <property type="entry name" value="GIY-YIG_endonuc"/>
</dbReference>
<dbReference type="InterPro" id="IPR035901">
    <property type="entry name" value="GIY-YIG_endonuc_sf"/>
</dbReference>
<dbReference type="InterPro" id="IPR050190">
    <property type="entry name" value="UPF0213_domain"/>
</dbReference>
<dbReference type="PANTHER" id="PTHR34477">
    <property type="entry name" value="UPF0213 PROTEIN YHBQ"/>
    <property type="match status" value="1"/>
</dbReference>
<dbReference type="PANTHER" id="PTHR34477:SF1">
    <property type="entry name" value="UPF0213 PROTEIN YHBQ"/>
    <property type="match status" value="1"/>
</dbReference>
<dbReference type="Pfam" id="PF01541">
    <property type="entry name" value="GIY-YIG"/>
    <property type="match status" value="1"/>
</dbReference>
<dbReference type="SUPFAM" id="SSF82771">
    <property type="entry name" value="GIY-YIG endonuclease"/>
    <property type="match status" value="1"/>
</dbReference>
<dbReference type="PROSITE" id="PS50164">
    <property type="entry name" value="GIY_YIG"/>
    <property type="match status" value="1"/>
</dbReference>
<reference key="1">
    <citation type="journal article" date="2006" name="Proc. Natl. Acad. Sci. U.S.A.">
        <title>Molecular genetic anatomy of inter- and intraserotype variation in the human bacterial pathogen group A Streptococcus.</title>
        <authorList>
            <person name="Beres S.B."/>
            <person name="Richter E.W."/>
            <person name="Nagiec M.J."/>
            <person name="Sumby P."/>
            <person name="Porcella S.F."/>
            <person name="DeLeo F.R."/>
            <person name="Musser J.M."/>
        </authorList>
    </citation>
    <scope>NUCLEOTIDE SEQUENCE [LARGE SCALE GENOMIC DNA]</scope>
    <source>
        <strain>MGAS10750</strain>
    </source>
</reference>
<name>Y1258_STRPF</name>